<reference key="1">
    <citation type="submission" date="2008-06" db="EMBL/GenBank/DDBJ databases">
        <title>Complete sequence of Stenotrophomonas maltophilia R551-3.</title>
        <authorList>
            <consortium name="US DOE Joint Genome Institute"/>
            <person name="Lucas S."/>
            <person name="Copeland A."/>
            <person name="Lapidus A."/>
            <person name="Glavina del Rio T."/>
            <person name="Dalin E."/>
            <person name="Tice H."/>
            <person name="Pitluck S."/>
            <person name="Chain P."/>
            <person name="Malfatti S."/>
            <person name="Shin M."/>
            <person name="Vergez L."/>
            <person name="Lang D."/>
            <person name="Schmutz J."/>
            <person name="Larimer F."/>
            <person name="Land M."/>
            <person name="Hauser L."/>
            <person name="Kyrpides N."/>
            <person name="Mikhailova N."/>
            <person name="Taghavi S."/>
            <person name="Monchy S."/>
            <person name="Newman L."/>
            <person name="Vangronsveld J."/>
            <person name="van der Lelie D."/>
            <person name="Richardson P."/>
        </authorList>
    </citation>
    <scope>NUCLEOTIDE SEQUENCE [LARGE SCALE GENOMIC DNA]</scope>
    <source>
        <strain>R551-3</strain>
    </source>
</reference>
<accession>B4SQT5</accession>
<protein>
    <recommendedName>
        <fullName evidence="2">NADH-quinone oxidoreductase subunit B</fullName>
        <ecNumber evidence="2">7.1.1.-</ecNumber>
    </recommendedName>
    <alternativeName>
        <fullName evidence="2">NADH dehydrogenase I subunit B</fullName>
    </alternativeName>
    <alternativeName>
        <fullName evidence="2">NDH-1 subunit B</fullName>
    </alternativeName>
</protein>
<sequence length="184" mass="20240">MGVIQTLDGLMNNPTPEGRVDDILRPEGDNPLLEKGFVTTSVDALLNWARTGSMWPMTFGLACCAVEMMHAGAARLDLDRYGVVFRPSPRQSDVMIVAGTLVNKMAPALRKVYDQMPDPKWVISMGSCANGGGYYHYSYSVVRGCDRVVPVDVYVPGCPPTAEALVYGILQLQKKIWRTQTIAR</sequence>
<name>NUOB_STRM5</name>
<proteinExistence type="inferred from homology"/>
<dbReference type="EC" id="7.1.1.-" evidence="2"/>
<dbReference type="EMBL" id="CP001111">
    <property type="protein sequence ID" value="ACF52530.1"/>
    <property type="molecule type" value="Genomic_DNA"/>
</dbReference>
<dbReference type="RefSeq" id="WP_005410463.1">
    <property type="nucleotide sequence ID" value="NC_011071.1"/>
</dbReference>
<dbReference type="SMR" id="B4SQT5"/>
<dbReference type="STRING" id="391008.Smal_2830"/>
<dbReference type="KEGG" id="smt:Smal_2830"/>
<dbReference type="eggNOG" id="COG0377">
    <property type="taxonomic scope" value="Bacteria"/>
</dbReference>
<dbReference type="HOGENOM" id="CLU_055737_7_0_6"/>
<dbReference type="OrthoDB" id="9786737at2"/>
<dbReference type="Proteomes" id="UP000001867">
    <property type="component" value="Chromosome"/>
</dbReference>
<dbReference type="GO" id="GO:0005886">
    <property type="term" value="C:plasma membrane"/>
    <property type="evidence" value="ECO:0007669"/>
    <property type="project" value="UniProtKB-SubCell"/>
</dbReference>
<dbReference type="GO" id="GO:0045271">
    <property type="term" value="C:respiratory chain complex I"/>
    <property type="evidence" value="ECO:0007669"/>
    <property type="project" value="TreeGrafter"/>
</dbReference>
<dbReference type="GO" id="GO:0051539">
    <property type="term" value="F:4 iron, 4 sulfur cluster binding"/>
    <property type="evidence" value="ECO:0007669"/>
    <property type="project" value="UniProtKB-KW"/>
</dbReference>
<dbReference type="GO" id="GO:0005506">
    <property type="term" value="F:iron ion binding"/>
    <property type="evidence" value="ECO:0007669"/>
    <property type="project" value="UniProtKB-UniRule"/>
</dbReference>
<dbReference type="GO" id="GO:0008137">
    <property type="term" value="F:NADH dehydrogenase (ubiquinone) activity"/>
    <property type="evidence" value="ECO:0007669"/>
    <property type="project" value="InterPro"/>
</dbReference>
<dbReference type="GO" id="GO:0050136">
    <property type="term" value="F:NADH:ubiquinone reductase (non-electrogenic) activity"/>
    <property type="evidence" value="ECO:0007669"/>
    <property type="project" value="UniProtKB-UniRule"/>
</dbReference>
<dbReference type="GO" id="GO:0048038">
    <property type="term" value="F:quinone binding"/>
    <property type="evidence" value="ECO:0007669"/>
    <property type="project" value="UniProtKB-KW"/>
</dbReference>
<dbReference type="GO" id="GO:0009060">
    <property type="term" value="P:aerobic respiration"/>
    <property type="evidence" value="ECO:0007669"/>
    <property type="project" value="TreeGrafter"/>
</dbReference>
<dbReference type="GO" id="GO:0015990">
    <property type="term" value="P:electron transport coupled proton transport"/>
    <property type="evidence" value="ECO:0007669"/>
    <property type="project" value="TreeGrafter"/>
</dbReference>
<dbReference type="FunFam" id="3.40.50.12280:FF:000001">
    <property type="entry name" value="NADH-quinone oxidoreductase subunit B 2"/>
    <property type="match status" value="1"/>
</dbReference>
<dbReference type="Gene3D" id="3.40.50.12280">
    <property type="match status" value="1"/>
</dbReference>
<dbReference type="HAMAP" id="MF_01356">
    <property type="entry name" value="NDH1_NuoB"/>
    <property type="match status" value="1"/>
</dbReference>
<dbReference type="InterPro" id="IPR006137">
    <property type="entry name" value="NADH_UbQ_OxRdtase-like_20kDa"/>
</dbReference>
<dbReference type="InterPro" id="IPR006138">
    <property type="entry name" value="NADH_UQ_OxRdtase_20Kd_su"/>
</dbReference>
<dbReference type="NCBIfam" id="TIGR01957">
    <property type="entry name" value="nuoB_fam"/>
    <property type="match status" value="1"/>
</dbReference>
<dbReference type="NCBIfam" id="NF005012">
    <property type="entry name" value="PRK06411.1"/>
    <property type="match status" value="1"/>
</dbReference>
<dbReference type="PANTHER" id="PTHR11995">
    <property type="entry name" value="NADH DEHYDROGENASE"/>
    <property type="match status" value="1"/>
</dbReference>
<dbReference type="PANTHER" id="PTHR11995:SF14">
    <property type="entry name" value="NADH DEHYDROGENASE [UBIQUINONE] IRON-SULFUR PROTEIN 7, MITOCHONDRIAL"/>
    <property type="match status" value="1"/>
</dbReference>
<dbReference type="Pfam" id="PF01058">
    <property type="entry name" value="Oxidored_q6"/>
    <property type="match status" value="1"/>
</dbReference>
<dbReference type="SUPFAM" id="SSF56770">
    <property type="entry name" value="HydA/Nqo6-like"/>
    <property type="match status" value="1"/>
</dbReference>
<dbReference type="PROSITE" id="PS01150">
    <property type="entry name" value="COMPLEX1_20K"/>
    <property type="match status" value="1"/>
</dbReference>
<evidence type="ECO:0000250" key="1"/>
<evidence type="ECO:0000255" key="2">
    <source>
        <dbReference type="HAMAP-Rule" id="MF_01356"/>
    </source>
</evidence>
<keyword id="KW-0004">4Fe-4S</keyword>
<keyword id="KW-0997">Cell inner membrane</keyword>
<keyword id="KW-1003">Cell membrane</keyword>
<keyword id="KW-0408">Iron</keyword>
<keyword id="KW-0411">Iron-sulfur</keyword>
<keyword id="KW-0472">Membrane</keyword>
<keyword id="KW-0479">Metal-binding</keyword>
<keyword id="KW-0520">NAD</keyword>
<keyword id="KW-0874">Quinone</keyword>
<keyword id="KW-1278">Translocase</keyword>
<keyword id="KW-0813">Transport</keyword>
<keyword id="KW-0830">Ubiquinone</keyword>
<gene>
    <name evidence="2" type="primary">nuoB</name>
    <name type="ordered locus">Smal_2830</name>
</gene>
<organism>
    <name type="scientific">Stenotrophomonas maltophilia (strain R551-3)</name>
    <dbReference type="NCBI Taxonomy" id="391008"/>
    <lineage>
        <taxon>Bacteria</taxon>
        <taxon>Pseudomonadati</taxon>
        <taxon>Pseudomonadota</taxon>
        <taxon>Gammaproteobacteria</taxon>
        <taxon>Lysobacterales</taxon>
        <taxon>Lysobacteraceae</taxon>
        <taxon>Stenotrophomonas</taxon>
        <taxon>Stenotrophomonas maltophilia group</taxon>
    </lineage>
</organism>
<feature type="chain" id="PRO_0000358485" description="NADH-quinone oxidoreductase subunit B">
    <location>
        <begin position="1"/>
        <end position="184"/>
    </location>
</feature>
<feature type="binding site" evidence="2">
    <location>
        <position position="63"/>
    </location>
    <ligand>
        <name>[4Fe-4S] cluster</name>
        <dbReference type="ChEBI" id="CHEBI:49883"/>
    </ligand>
</feature>
<feature type="binding site" evidence="2">
    <location>
        <position position="64"/>
    </location>
    <ligand>
        <name>[4Fe-4S] cluster</name>
        <dbReference type="ChEBI" id="CHEBI:49883"/>
    </ligand>
</feature>
<feature type="binding site" evidence="2">
    <location>
        <position position="128"/>
    </location>
    <ligand>
        <name>[4Fe-4S] cluster</name>
        <dbReference type="ChEBI" id="CHEBI:49883"/>
    </ligand>
</feature>
<feature type="binding site" evidence="2">
    <location>
        <position position="158"/>
    </location>
    <ligand>
        <name>[4Fe-4S] cluster</name>
        <dbReference type="ChEBI" id="CHEBI:49883"/>
    </ligand>
</feature>
<comment type="function">
    <text evidence="1">NDH-1 shuttles electrons from NADH, via FMN and iron-sulfur (Fe-S) centers, to quinones in the respiratory chain. Couples the redox reaction to proton translocation (for every two electrons transferred, four hydrogen ions are translocated across the cytoplasmic membrane), and thus conserves the redox energy in a proton gradient (By similarity).</text>
</comment>
<comment type="catalytic activity">
    <reaction evidence="2">
        <text>a quinone + NADH + 5 H(+)(in) = a quinol + NAD(+) + 4 H(+)(out)</text>
        <dbReference type="Rhea" id="RHEA:57888"/>
        <dbReference type="ChEBI" id="CHEBI:15378"/>
        <dbReference type="ChEBI" id="CHEBI:24646"/>
        <dbReference type="ChEBI" id="CHEBI:57540"/>
        <dbReference type="ChEBI" id="CHEBI:57945"/>
        <dbReference type="ChEBI" id="CHEBI:132124"/>
    </reaction>
</comment>
<comment type="cofactor">
    <cofactor evidence="2">
        <name>[4Fe-4S] cluster</name>
        <dbReference type="ChEBI" id="CHEBI:49883"/>
    </cofactor>
    <text evidence="2">Binds 1 [4Fe-4S] cluster.</text>
</comment>
<comment type="subunit">
    <text evidence="2">NDH-1 is composed of 14 different subunits. Subunits NuoB, C, D, E, F, and G constitute the peripheral sector of the complex.</text>
</comment>
<comment type="subcellular location">
    <subcellularLocation>
        <location evidence="2">Cell inner membrane</location>
        <topology evidence="2">Peripheral membrane protein</topology>
        <orientation evidence="2">Cytoplasmic side</orientation>
    </subcellularLocation>
</comment>
<comment type="similarity">
    <text evidence="2">Belongs to the complex I 20 kDa subunit family.</text>
</comment>